<feature type="signal peptide" evidence="5">
    <location>
        <begin position="1"/>
        <end position="26"/>
    </location>
</feature>
<feature type="chain" id="PRO_0000440143" description="Apolipoprotein C-I" evidence="2">
    <location>
        <begin position="27"/>
        <end position="78"/>
    </location>
</feature>
<feature type="chain" id="PRO_0000440144" description="Truncated apolipoprotein C-I" evidence="4">
    <location>
        <begin position="29"/>
        <end position="78"/>
    </location>
</feature>
<accession>P0DP51</accession>
<organism>
    <name type="scientific">Acinonyx jubatus</name>
    <name type="common">Cheetah</name>
    <dbReference type="NCBI Taxonomy" id="32536"/>
    <lineage>
        <taxon>Eukaryota</taxon>
        <taxon>Metazoa</taxon>
        <taxon>Chordata</taxon>
        <taxon>Craniata</taxon>
        <taxon>Vertebrata</taxon>
        <taxon>Euteleostomi</taxon>
        <taxon>Mammalia</taxon>
        <taxon>Eutheria</taxon>
        <taxon>Laurasiatheria</taxon>
        <taxon>Carnivora</taxon>
        <taxon>Feliformia</taxon>
        <taxon>Felidae</taxon>
        <taxon>Felinae</taxon>
        <taxon>Acinonyx</taxon>
    </lineage>
</organism>
<protein>
    <recommendedName>
        <fullName>Apolipoprotein C-I</fullName>
        <shortName>Apo-CI</shortName>
        <shortName>ApoC-I</shortName>
    </recommendedName>
    <alternativeName>
        <fullName>Apolipoprotein C1</fullName>
    </alternativeName>
    <component>
        <recommendedName>
            <fullName>Truncated apolipoprotein C-I</fullName>
        </recommendedName>
    </component>
</protein>
<comment type="function">
    <text evidence="1 3">Inhibitor of lipoprotein binding to the low density lipoprotein (LDL) receptor, LDL receptor-related protein, and very low density lipoprotein (VLDL) receptor. Associates with high density lipoproteins (HDL) and the triacylglycerol-rich lipoproteins in the plasma and makes up about 10% of the protein of the VLDL and 2% of that of HDL. Appears to interfere directly with fatty acid uptake and is also the major plasma inhibitor of cholesteryl ester transfer protein (CETP). Binds free fatty acids and reduces their intracellular esterification. Modulates the interaction of APOE with beta-migrating VLDL and inhibits binding of beta-VLDL to the LDL receptor-related protein.</text>
</comment>
<comment type="subcellular location">
    <subcellularLocation>
        <location evidence="1">Secreted</location>
    </subcellularLocation>
</comment>
<comment type="similarity">
    <text evidence="6">Belongs to the apolipoprotein C1 family.</text>
</comment>
<name>APOC1_ACIJB</name>
<dbReference type="EMBL" id="LLWD01000328">
    <property type="status" value="NOT_ANNOTATED_CDS"/>
    <property type="molecule type" value="Genomic_DNA"/>
</dbReference>
<dbReference type="RefSeq" id="XP_014926244.1">
    <property type="nucleotide sequence ID" value="XM_015070758.3"/>
</dbReference>
<dbReference type="SMR" id="P0DP51"/>
<dbReference type="GeneID" id="106973668"/>
<dbReference type="KEGG" id="aju:106973668"/>
<dbReference type="CTD" id="341"/>
<dbReference type="Proteomes" id="UP000504626">
    <property type="component" value="Unplaced"/>
</dbReference>
<dbReference type="GO" id="GO:0034364">
    <property type="term" value="C:high-density lipoprotein particle"/>
    <property type="evidence" value="ECO:0007669"/>
    <property type="project" value="TreeGrafter"/>
</dbReference>
<dbReference type="GO" id="GO:0034361">
    <property type="term" value="C:very-low-density lipoprotein particle"/>
    <property type="evidence" value="ECO:0007669"/>
    <property type="project" value="UniProtKB-KW"/>
</dbReference>
<dbReference type="GO" id="GO:0005504">
    <property type="term" value="F:fatty acid binding"/>
    <property type="evidence" value="ECO:0007669"/>
    <property type="project" value="TreeGrafter"/>
</dbReference>
<dbReference type="GO" id="GO:0004859">
    <property type="term" value="F:phospholipase inhibitor activity"/>
    <property type="evidence" value="ECO:0007669"/>
    <property type="project" value="TreeGrafter"/>
</dbReference>
<dbReference type="GO" id="GO:0006869">
    <property type="term" value="P:lipid transport"/>
    <property type="evidence" value="ECO:0007669"/>
    <property type="project" value="UniProtKB-KW"/>
</dbReference>
<dbReference type="GO" id="GO:0042157">
    <property type="term" value="P:lipoprotein metabolic process"/>
    <property type="evidence" value="ECO:0007669"/>
    <property type="project" value="InterPro"/>
</dbReference>
<dbReference type="GO" id="GO:0032375">
    <property type="term" value="P:negative regulation of cholesterol transport"/>
    <property type="evidence" value="ECO:0007669"/>
    <property type="project" value="TreeGrafter"/>
</dbReference>
<dbReference type="GO" id="GO:0050995">
    <property type="term" value="P:negative regulation of lipid catabolic process"/>
    <property type="evidence" value="ECO:0007669"/>
    <property type="project" value="TreeGrafter"/>
</dbReference>
<dbReference type="GO" id="GO:0010916">
    <property type="term" value="P:negative regulation of very-low-density lipoprotein particle clearance"/>
    <property type="evidence" value="ECO:0007669"/>
    <property type="project" value="TreeGrafter"/>
</dbReference>
<dbReference type="GO" id="GO:0006641">
    <property type="term" value="P:triglyceride metabolic process"/>
    <property type="evidence" value="ECO:0007669"/>
    <property type="project" value="TreeGrafter"/>
</dbReference>
<dbReference type="GO" id="GO:0034447">
    <property type="term" value="P:very-low-density lipoprotein particle clearance"/>
    <property type="evidence" value="ECO:0007669"/>
    <property type="project" value="TreeGrafter"/>
</dbReference>
<dbReference type="InterPro" id="IPR006781">
    <property type="entry name" value="ApoC-I"/>
</dbReference>
<dbReference type="PANTHER" id="PTHR16565">
    <property type="entry name" value="APOLIPOPROTEIN C-I"/>
    <property type="match status" value="1"/>
</dbReference>
<dbReference type="PANTHER" id="PTHR16565:SF2">
    <property type="entry name" value="APOLIPOPROTEIN C-I"/>
    <property type="match status" value="1"/>
</dbReference>
<keyword id="KW-0445">Lipid transport</keyword>
<keyword id="KW-1185">Reference proteome</keyword>
<keyword id="KW-0964">Secreted</keyword>
<keyword id="KW-0732">Signal</keyword>
<keyword id="KW-0813">Transport</keyword>
<keyword id="KW-0850">VLDL</keyword>
<evidence type="ECO:0000250" key="1">
    <source>
        <dbReference type="UniProtKB" id="P02654"/>
    </source>
</evidence>
<evidence type="ECO:0000250" key="2">
    <source>
        <dbReference type="UniProtKB" id="P0DM84"/>
    </source>
</evidence>
<evidence type="ECO:0000250" key="3">
    <source>
        <dbReference type="UniProtKB" id="P33047"/>
    </source>
</evidence>
<evidence type="ECO:0000250" key="4">
    <source>
        <dbReference type="UniProtKB" id="P86336"/>
    </source>
</evidence>
<evidence type="ECO:0000255" key="5"/>
<evidence type="ECO:0000305" key="6"/>
<reference key="1">
    <citation type="submission" date="2015-10" db="EMBL/GenBank/DDBJ databases">
        <title>Genomic legacy of the African cheetah, Acinonyx jubatus.</title>
        <authorList>
            <person name="Dobrynin P."/>
            <person name="Liu S."/>
            <person name="Tamazian G."/>
            <person name="Xiong Z."/>
            <person name="Yurchenko A."/>
            <person name="Krasheninnikova K."/>
            <person name="Kliver S."/>
            <person name="Koepfli K.-P."/>
            <person name="Johnson W."/>
            <person name="Kuderna L."/>
            <person name="Garcia-Perez R."/>
            <person name="Montero M.D.M."/>
            <person name="Godinez R."/>
            <person name="Makunin A."/>
            <person name="Komissarov A."/>
            <person name="Brukhin V."/>
            <person name="Qiu W."/>
            <person name="Zhou L."/>
            <person name="Li F."/>
            <person name="Yi J."/>
            <person name="Driscoll C."/>
            <person name="Antunes A."/>
            <person name="Oleksyk T.K."/>
            <person name="Eizirik E."/>
            <person name="Perelman P."/>
            <person name="Roelke' M."/>
            <person name="Wildt D."/>
            <person name="Diekhans M."/>
            <person name="Marques-Bonet T."/>
            <person name="Schmidt-Kuntzel A."/>
            <person name="Marker L."/>
            <person name="Bhak J."/>
            <person name="Wang J."/>
            <person name="Zhang G."/>
            <person name="Obrien S."/>
        </authorList>
    </citation>
    <scope>NUCLEOTIDE SEQUENCE [LARGE SCALE GENOMIC DNA]</scope>
</reference>
<reference key="2">
    <citation type="unpublished observations" date="2017-04">
        <authorList>
            <person name="Puppione D.L."/>
        </authorList>
    </citation>
    <scope>IDENTIFICATION</scope>
</reference>
<proteinExistence type="inferred from homology"/>
<gene>
    <name type="primary">APOC1</name>
</gene>
<sequence length="78" mass="8484">MRLILCLPVLVVVLLMVLEGPAPAQGAPAIASTFRNIPNSLKEFGNNLKDAFESIPEATQKLMTSFAEGLKNFRIPMV</sequence>